<dbReference type="EMBL" id="AC148222">
    <property type="status" value="NOT_ANNOTATED_CDS"/>
    <property type="molecule type" value="Genomic_DNA"/>
</dbReference>
<dbReference type="SMR" id="P0DKU9"/>
<dbReference type="GO" id="GO:0042627">
    <property type="term" value="C:chylomicron"/>
    <property type="evidence" value="ECO:0007669"/>
    <property type="project" value="UniProtKB-KW"/>
</dbReference>
<dbReference type="GO" id="GO:0070062">
    <property type="term" value="C:extracellular exosome"/>
    <property type="evidence" value="ECO:0000250"/>
    <property type="project" value="UniProtKB"/>
</dbReference>
<dbReference type="GO" id="GO:0031012">
    <property type="term" value="C:extracellular matrix"/>
    <property type="evidence" value="ECO:0000250"/>
    <property type="project" value="UniProtKB"/>
</dbReference>
<dbReference type="GO" id="GO:0005615">
    <property type="term" value="C:extracellular space"/>
    <property type="evidence" value="ECO:0000250"/>
    <property type="project" value="UniProtKB"/>
</dbReference>
<dbReference type="GO" id="GO:0034364">
    <property type="term" value="C:high-density lipoprotein particle"/>
    <property type="evidence" value="ECO:0000250"/>
    <property type="project" value="UniProtKB"/>
</dbReference>
<dbReference type="GO" id="GO:0034363">
    <property type="term" value="C:intermediate-density lipoprotein particle"/>
    <property type="evidence" value="ECO:0000250"/>
    <property type="project" value="UniProtKB"/>
</dbReference>
<dbReference type="GO" id="GO:0034362">
    <property type="term" value="C:low-density lipoprotein particle"/>
    <property type="evidence" value="ECO:0000250"/>
    <property type="project" value="UniProtKB"/>
</dbReference>
<dbReference type="GO" id="GO:0097487">
    <property type="term" value="C:multivesicular body, internal vesicle"/>
    <property type="evidence" value="ECO:0000250"/>
    <property type="project" value="UniProtKB"/>
</dbReference>
<dbReference type="GO" id="GO:0034361">
    <property type="term" value="C:very-low-density lipoprotein particle"/>
    <property type="evidence" value="ECO:0000250"/>
    <property type="project" value="UniProtKB"/>
</dbReference>
<dbReference type="GO" id="GO:0120020">
    <property type="term" value="F:cholesterol transfer activity"/>
    <property type="evidence" value="ECO:0007669"/>
    <property type="project" value="TreeGrafter"/>
</dbReference>
<dbReference type="GO" id="GO:0043395">
    <property type="term" value="F:heparan sulfate proteoglycan binding"/>
    <property type="evidence" value="ECO:0000250"/>
    <property type="project" value="UniProtKB"/>
</dbReference>
<dbReference type="GO" id="GO:0008201">
    <property type="term" value="F:heparin binding"/>
    <property type="evidence" value="ECO:0000250"/>
    <property type="project" value="UniProtKB"/>
</dbReference>
<dbReference type="GO" id="GO:0042802">
    <property type="term" value="F:identical protein binding"/>
    <property type="evidence" value="ECO:0000250"/>
    <property type="project" value="UniProtKB"/>
</dbReference>
<dbReference type="GO" id="GO:0050750">
    <property type="term" value="F:low-density lipoprotein particle receptor binding"/>
    <property type="evidence" value="ECO:0000250"/>
    <property type="project" value="UniProtKB"/>
</dbReference>
<dbReference type="GO" id="GO:0060228">
    <property type="term" value="F:phosphatidylcholine-sterol O-acyltransferase activator activity"/>
    <property type="evidence" value="ECO:0007669"/>
    <property type="project" value="TreeGrafter"/>
</dbReference>
<dbReference type="GO" id="GO:0005543">
    <property type="term" value="F:phospholipid binding"/>
    <property type="evidence" value="ECO:0007669"/>
    <property type="project" value="TreeGrafter"/>
</dbReference>
<dbReference type="GO" id="GO:0055090">
    <property type="term" value="P:acylglycerol homeostasis"/>
    <property type="evidence" value="ECO:0007669"/>
    <property type="project" value="TreeGrafter"/>
</dbReference>
<dbReference type="GO" id="GO:0033344">
    <property type="term" value="P:cholesterol efflux"/>
    <property type="evidence" value="ECO:0000250"/>
    <property type="project" value="UniProtKB"/>
</dbReference>
<dbReference type="GO" id="GO:0008203">
    <property type="term" value="P:cholesterol metabolic process"/>
    <property type="evidence" value="ECO:0007669"/>
    <property type="project" value="TreeGrafter"/>
</dbReference>
<dbReference type="GO" id="GO:0034382">
    <property type="term" value="P:chylomicron remnant clearance"/>
    <property type="evidence" value="ECO:0000250"/>
    <property type="project" value="UniProtKB"/>
</dbReference>
<dbReference type="GO" id="GO:0034380">
    <property type="term" value="P:high-density lipoprotein particle assembly"/>
    <property type="evidence" value="ECO:0000250"/>
    <property type="project" value="UniProtKB"/>
</dbReference>
<dbReference type="GO" id="GO:0071831">
    <property type="term" value="P:intermediate-density lipoprotein particle clearance"/>
    <property type="evidence" value="ECO:0000250"/>
    <property type="project" value="UniProtKB"/>
</dbReference>
<dbReference type="GO" id="GO:0042158">
    <property type="term" value="P:lipoprotein biosynthetic process"/>
    <property type="evidence" value="ECO:0000250"/>
    <property type="project" value="UniProtKB"/>
</dbReference>
<dbReference type="GO" id="GO:0032438">
    <property type="term" value="P:melanosome organization"/>
    <property type="evidence" value="ECO:0000250"/>
    <property type="project" value="UniProtKB"/>
</dbReference>
<dbReference type="GO" id="GO:1905907">
    <property type="term" value="P:negative regulation of amyloid fibril formation"/>
    <property type="evidence" value="ECO:0000250"/>
    <property type="project" value="UniProtKB"/>
</dbReference>
<dbReference type="GO" id="GO:0031175">
    <property type="term" value="P:neuron projection development"/>
    <property type="evidence" value="ECO:0000250"/>
    <property type="project" value="UniProtKB"/>
</dbReference>
<dbReference type="GO" id="GO:0033700">
    <property type="term" value="P:phospholipid efflux"/>
    <property type="evidence" value="ECO:0007669"/>
    <property type="project" value="TreeGrafter"/>
</dbReference>
<dbReference type="GO" id="GO:1900223">
    <property type="term" value="P:positive regulation of amyloid-beta clearance"/>
    <property type="evidence" value="ECO:0000250"/>
    <property type="project" value="UniProtKB"/>
</dbReference>
<dbReference type="GO" id="GO:0071830">
    <property type="term" value="P:triglyceride-rich lipoprotein particle clearance"/>
    <property type="evidence" value="ECO:0000250"/>
    <property type="project" value="UniProtKB"/>
</dbReference>
<dbReference type="GO" id="GO:0034447">
    <property type="term" value="P:very-low-density lipoprotein particle clearance"/>
    <property type="evidence" value="ECO:0000250"/>
    <property type="project" value="UniProtKB"/>
</dbReference>
<dbReference type="FunFam" id="1.20.120.20:FF:000002">
    <property type="entry name" value="Apolipoprotein E"/>
    <property type="match status" value="1"/>
</dbReference>
<dbReference type="FunFam" id="1.20.120.20:FF:000003">
    <property type="entry name" value="Apolipoprotein E"/>
    <property type="match status" value="1"/>
</dbReference>
<dbReference type="Gene3D" id="1.20.120.20">
    <property type="entry name" value="Apolipoprotein"/>
    <property type="match status" value="2"/>
</dbReference>
<dbReference type="InterPro" id="IPR000074">
    <property type="entry name" value="ApoA_E"/>
</dbReference>
<dbReference type="InterPro" id="IPR050163">
    <property type="entry name" value="Apolipoprotein_A1/A4/E"/>
</dbReference>
<dbReference type="PANTHER" id="PTHR18976">
    <property type="entry name" value="APOLIPOPROTEIN"/>
    <property type="match status" value="1"/>
</dbReference>
<dbReference type="PANTHER" id="PTHR18976:SF2">
    <property type="entry name" value="APOLIPOPROTEIN E"/>
    <property type="match status" value="1"/>
</dbReference>
<dbReference type="Pfam" id="PF01442">
    <property type="entry name" value="Apolipoprotein"/>
    <property type="match status" value="1"/>
</dbReference>
<dbReference type="SUPFAM" id="SSF58113">
    <property type="entry name" value="Apolipoprotein A-I"/>
    <property type="match status" value="1"/>
</dbReference>
<protein>
    <recommendedName>
        <fullName>Apolipoprotein E</fullName>
        <shortName>Apo-E</shortName>
    </recommendedName>
</protein>
<organism>
    <name type="scientific">Colobus guereza</name>
    <name type="common">Mantled guereza</name>
    <name type="synonym">Eastern black-and-white colobus monkey</name>
    <dbReference type="NCBI Taxonomy" id="33548"/>
    <lineage>
        <taxon>Eukaryota</taxon>
        <taxon>Metazoa</taxon>
        <taxon>Chordata</taxon>
        <taxon>Craniata</taxon>
        <taxon>Vertebrata</taxon>
        <taxon>Euteleostomi</taxon>
        <taxon>Mammalia</taxon>
        <taxon>Eutheria</taxon>
        <taxon>Euarchontoglires</taxon>
        <taxon>Primates</taxon>
        <taxon>Haplorrhini</taxon>
        <taxon>Catarrhini</taxon>
        <taxon>Cercopithecidae</taxon>
        <taxon>Colobinae</taxon>
        <taxon>Colobus</taxon>
    </lineage>
</organism>
<keyword id="KW-0162">Chylomicron</keyword>
<keyword id="KW-0967">Endosome</keyword>
<keyword id="KW-0272">Extracellular matrix</keyword>
<keyword id="KW-0325">Glycoprotein</keyword>
<keyword id="KW-0345">HDL</keyword>
<keyword id="KW-0358">Heparin-binding</keyword>
<keyword id="KW-0445">Lipid transport</keyword>
<keyword id="KW-0446">Lipid-binding</keyword>
<keyword id="KW-0558">Oxidation</keyword>
<keyword id="KW-0597">Phosphoprotein</keyword>
<keyword id="KW-0677">Repeat</keyword>
<keyword id="KW-0964">Secreted</keyword>
<keyword id="KW-0732">Signal</keyword>
<keyword id="KW-0813">Transport</keyword>
<keyword id="KW-0850">VLDL</keyword>
<reference key="1">
    <citation type="submission" date="2006-07" db="EMBL/GenBank/DDBJ databases">
        <authorList>
            <person name="Cheng J.-F."/>
            <person name="Hamilton M."/>
            <person name="Peng Y."/>
            <person name="Hosseini R."/>
            <person name="Peng Z."/>
            <person name="Malinov I."/>
            <person name="Rubin E.M."/>
        </authorList>
    </citation>
    <scope>NUCLEOTIDE SEQUENCE [LARGE SCALE GENOMIC DNA]</scope>
</reference>
<reference key="2">
    <citation type="unpublished observations" date="2012-11">
        <authorList>
            <person name="Puppione D.L."/>
        </authorList>
    </citation>
    <scope>IDENTIFICATION</scope>
</reference>
<name>APOE_COLGU</name>
<evidence type="ECO:0000250" key="1">
    <source>
        <dbReference type="UniProtKB" id="P02649"/>
    </source>
</evidence>
<evidence type="ECO:0000250" key="2">
    <source>
        <dbReference type="UniProtKB" id="P08226"/>
    </source>
</evidence>
<evidence type="ECO:0000255" key="3"/>
<evidence type="ECO:0000305" key="4"/>
<feature type="signal peptide" evidence="3">
    <location>
        <begin position="1"/>
        <end position="18"/>
    </location>
</feature>
<feature type="chain" id="PRO_0000420903" description="Apolipoprotein E">
    <location>
        <begin position="19"/>
        <end position="317"/>
    </location>
</feature>
<feature type="repeat" description="1">
    <location>
        <begin position="80"/>
        <end position="101"/>
    </location>
</feature>
<feature type="repeat" description="2">
    <location>
        <begin position="102"/>
        <end position="123"/>
    </location>
</feature>
<feature type="repeat" description="3">
    <location>
        <begin position="124"/>
        <end position="145"/>
    </location>
</feature>
<feature type="repeat" description="4">
    <location>
        <begin position="146"/>
        <end position="167"/>
    </location>
</feature>
<feature type="repeat" description="5">
    <location>
        <begin position="168"/>
        <end position="189"/>
    </location>
</feature>
<feature type="repeat" description="6">
    <location>
        <begin position="190"/>
        <end position="211"/>
    </location>
</feature>
<feature type="repeat" description="7">
    <location>
        <begin position="212"/>
        <end position="233"/>
    </location>
</feature>
<feature type="repeat" description="8">
    <location>
        <begin position="234"/>
        <end position="255"/>
    </location>
</feature>
<feature type="region of interest" description="8 X 22 AA approximate tandem repeats">
    <location>
        <begin position="80"/>
        <end position="255"/>
    </location>
</feature>
<feature type="region of interest" description="LDL and other lipoprotein receptors binding" evidence="1">
    <location>
        <begin position="158"/>
        <end position="168"/>
    </location>
</feature>
<feature type="region of interest" description="Lipid-binding and lipoprotein association" evidence="1">
    <location>
        <begin position="210"/>
        <end position="290"/>
    </location>
</feature>
<feature type="region of interest" description="Homooligomerization" evidence="1">
    <location>
        <begin position="266"/>
        <end position="317"/>
    </location>
</feature>
<feature type="region of interest" description="Specificity for association with VLDL" evidence="1">
    <location>
        <begin position="278"/>
        <end position="290"/>
    </location>
</feature>
<feature type="binding site" evidence="1">
    <location>
        <begin position="162"/>
        <end position="165"/>
    </location>
    <ligand>
        <name>heparin</name>
        <dbReference type="ChEBI" id="CHEBI:28304"/>
    </ligand>
</feature>
<feature type="binding site" evidence="1">
    <location>
        <begin position="229"/>
        <end position="236"/>
    </location>
    <ligand>
        <name>heparin</name>
        <dbReference type="ChEBI" id="CHEBI:28304"/>
    </ligand>
</feature>
<feature type="modified residue" description="Methionine sulfoxide" evidence="2">
    <location>
        <position position="143"/>
    </location>
</feature>
<feature type="modified residue" description="Phosphoserine" evidence="1">
    <location>
        <position position="147"/>
    </location>
</feature>
<proteinExistence type="inferred from homology"/>
<accession>P0DKU9</accession>
<comment type="function">
    <text evidence="1">APOE is an apolipoprotein, a protein associating with lipid particles, that mainly functions in lipoprotein-mediated lipid transport between organs via the plasma and interstitial fluids. APOE is a core component of plasma lipoproteins and is involved in their production, conversion and clearance. Apolipoproteins are amphipathic molecules that interact both with lipids of the lipoprotein particle core and the aqueous environment of the plasma. As such, APOE associates with chylomicrons, chylomicron remnants, very low density lipoproteins (VLDL) and intermediate density lipoproteins (IDL) but shows a preferential binding to high-density lipoproteins (HDL). It also binds a wide range of cellular receptors including the LDL receptor/LDLR, the LDL receptor-related proteins LRP1, LRP2 and LRP8 and the very low-density lipoprotein receptor/VLDLR that mediate the cellular uptake of the APOE-containing lipoprotein particles. Finally, APOE also has a heparin-binding activity and binds heparan-sulfate proteoglycans on the surface of cells, a property that supports the capture and the receptor-mediated uptake of APOE-containing lipoproteins by cells. A main function of APOE is to mediate lipoprotein clearance through the uptake of chylomicrons, VLDLs, and HDLs by hepatocytes. APOE is also involved in the biosynthesis by the liver of VLDLs as well as their uptake by peripheral tissues ensuring the delivery of triglycerides and energy storage in muscle, heart and adipose tissues. By participating in the lipoprotein-mediated distribution of lipids among tissues, APOE plays a critical role in plasma and tissues lipid homeostasis. APOE is also involved in two steps of reverse cholesterol transport, the HDLs-mediated transport of cholesterol from peripheral tissues to the liver, and thereby plays an important role in cholesterol homeostasis. First, it is functionally associated with ABCA1 in the biogenesis of HDLs in tissues. Second, it is enriched in circulating HDLs and mediates their uptake by hepatocytes. APOE also plays an important role in lipid transport in the central nervous system, regulating neuron survival and sprouting.</text>
</comment>
<comment type="subunit">
    <text evidence="1">Homotetramer. May interact with ABCA1; functionally associated with ABCA1 in the biogenesis of HDLs. May interact with APP/A4 amyloid-beta peptide; the interaction is extremely stable in vitro but its physiological significance is unclear. May interact with MAPT. May interact with MAP2. In the cerebrospinal fluid, interacts with secreted SORL1. Interacts with PMEL; this allows the loading of PMEL luminal fragment on ILVs to induce fibril nucleation.</text>
</comment>
<comment type="subcellular location">
    <subcellularLocation>
        <location evidence="1">Secreted</location>
    </subcellularLocation>
    <subcellularLocation>
        <location evidence="1">Secreted</location>
        <location evidence="1">Extracellular space</location>
    </subcellularLocation>
    <subcellularLocation>
        <location evidence="1">Secreted</location>
        <location evidence="1">Extracellular space</location>
        <location evidence="1">Extracellular matrix</location>
    </subcellularLocation>
    <subcellularLocation>
        <location evidence="1">Extracellular vesicle</location>
    </subcellularLocation>
    <subcellularLocation>
        <location evidence="1">Endosome</location>
        <location evidence="1">Multivesicular body</location>
    </subcellularLocation>
    <text evidence="1">In the plasma, APOE is associated with chylomicrons, chylomicrons remnants, VLDL, LDL and HDL lipoproteins. Lipid poor oligomeric APOE is associated with the extracellular matrix in a calcium- and heparan-sulfate proteoglycans-dependent manner. Lipidation induces the release from the extracellular matrix. Colocalizes with CD63 and PMEL at exosomes and in intraluminal vesicles within multivesicular endosomes.</text>
</comment>
<comment type="PTM">
    <text evidence="1">APOE exists as multiple glycosylated and sialylated glycoforms within cells and in plasma. The extent of glycosylation and sialylation are tissue and context specific.</text>
</comment>
<comment type="PTM">
    <text evidence="1">Glycated in plasma VLDL.</text>
</comment>
<comment type="PTM">
    <text evidence="1">Phosphorylated by FAM20C in the extracellular medium.</text>
</comment>
<comment type="similarity">
    <text evidence="4">Belongs to the apolipoprotein A1/A4/E family.</text>
</comment>
<gene>
    <name type="primary">APOE</name>
</gene>
<sequence>MKVLWAALLVTFLAGCQAKVEQPVESEPEPELRQQTEWQSGQPWELALGRFWDYLRWVQTLSEQVQEELLSSQVTQELTTLMDETMKELKAYKSDLEEQLSPVAEETRARLSKELQAAQARLGADMEDVRSRLVQYRGEVQAMLGQSTEELRARLASHLRKLRKRLLRDADDLQKRLAVYQAGAREGAERGVSAIRERLGPLVEQGRVRAATVGSLAGQPLQERAQAWGERLRARMEEVGSRTRDRLDEVKEQVAEVRAKLEEQAQQISLQAEAFQARLKSWFEPLVEDMQRQWAGLVEKVQAAVGASTAPVPSDNH</sequence>